<name>DRE1A_ARATH</name>
<evidence type="ECO:0000255" key="1"/>
<evidence type="ECO:0000255" key="2">
    <source>
        <dbReference type="PROSITE-ProRule" id="PRU00366"/>
    </source>
</evidence>
<evidence type="ECO:0000269" key="3">
    <source>
    </source>
</evidence>
<evidence type="ECO:0000269" key="4">
    <source>
    </source>
</evidence>
<evidence type="ECO:0000269" key="5">
    <source>
    </source>
</evidence>
<evidence type="ECO:0000269" key="6">
    <source>
    </source>
</evidence>
<evidence type="ECO:0000269" key="7">
    <source>
    </source>
</evidence>
<evidence type="ECO:0000269" key="8">
    <source>
    </source>
</evidence>
<evidence type="ECO:0000303" key="9">
    <source>
    </source>
</evidence>
<evidence type="ECO:0000303" key="10">
    <source>
    </source>
</evidence>
<evidence type="ECO:0000303" key="11">
    <source>
    </source>
</evidence>
<evidence type="ECO:0000305" key="12"/>
<evidence type="ECO:0000312" key="13">
    <source>
        <dbReference type="Araport" id="AT4G25480"/>
    </source>
</evidence>
<evidence type="ECO:0000312" key="14">
    <source>
        <dbReference type="EMBL" id="CAA18178.1"/>
    </source>
</evidence>
<reference key="1">
    <citation type="journal article" date="1998" name="Plant Cell">
        <title>Two transcription factors, DREB1 and DREB2, with an EREBP/AP2 DNA binding domain separate two cellular signal transduction pathways in drought- and low-temperature-responsive gene expression, respectively, in Arabidopsis.</title>
        <authorList>
            <person name="Liu Q."/>
            <person name="Kasuga M."/>
            <person name="Sakuma Y."/>
            <person name="Abe H."/>
            <person name="Miura S."/>
            <person name="Yamaguchi-Shinozaki K."/>
            <person name="Shinozaki K."/>
        </authorList>
    </citation>
    <scope>NUCLEOTIDE SEQUENCE [MRNA]</scope>
    <scope>INDUCTION</scope>
    <source>
        <strain>cv. Columbia</strain>
    </source>
</reference>
<reference key="2">
    <citation type="journal article" date="1998" name="Biochem. Biophys. Res. Commun.">
        <title>An Arabidopsis gene family encoding DRE/CRT binding proteins involved in low-temperature -responsive gene expression.</title>
        <authorList>
            <person name="Shinwari Z.K."/>
            <person name="Nakashima K."/>
            <person name="Miura S."/>
            <person name="Kasuga M."/>
            <person name="Seki M."/>
            <person name="Yamaguchi-Shinozaki K."/>
            <person name="Shinozaki K."/>
        </authorList>
    </citation>
    <scope>NUCLEOTIDE SEQUENCE [GENOMIC DNA]</scope>
    <scope>INDUCTION</scope>
    <source>
        <strain>cv. Columbia</strain>
    </source>
</reference>
<reference key="3">
    <citation type="journal article" date="1998" name="Plant J.">
        <title>Low temperature regulation of the Arabidopsis CBF family of AP2 transcriptional activators as an early step in cold-induced COR gene expression.</title>
        <authorList>
            <person name="Gilmour S.J."/>
            <person name="Zarka D.G."/>
            <person name="Stockinger E.J."/>
            <person name="Salazar M.P."/>
            <person name="Houghton J.M."/>
            <person name="Thomashow M.F."/>
        </authorList>
    </citation>
    <scope>NUCLEOTIDE SEQUENCE [GENOMIC DNA / MRNA]</scope>
    <source>
        <strain>cv. Columbia</strain>
        <strain>cv. Landsberg erecta</strain>
    </source>
</reference>
<reference key="4">
    <citation type="journal article" date="1999" name="Plant Physiol.">
        <title>The Arabidopsis CBF gene family is composed of three genes encoding AP2 domain-containing proteins whose expression is regulated by low temperature but not by abscisic acid or dehydration.</title>
        <authorList>
            <person name="Medina J."/>
            <person name="Bargues M."/>
            <person name="Terol J."/>
            <person name="Perez-Alonso M."/>
            <person name="Salinas J."/>
        </authorList>
    </citation>
    <scope>NUCLEOTIDE SEQUENCE [GENOMIC DNA / MRNA]</scope>
    <scope>INDUCTION</scope>
    <source>
        <strain>cv. Columbia</strain>
    </source>
</reference>
<reference key="5">
    <citation type="journal article" date="2005" name="Plant Physiol.">
        <title>Genetic and molecular analyses of natural variation indicate CBF2 as a candidate gene for underlying a freezing tolerance quantitative trait locus in Arabidopsis.</title>
        <authorList>
            <person name="Alonso-Blanco C."/>
            <person name="Gomez-Mena C."/>
            <person name="Llorente F."/>
            <person name="Koornneef M."/>
            <person name="Salinas J."/>
            <person name="Martinez-Zapater J.M."/>
        </authorList>
    </citation>
    <scope>NUCLEOTIDE SEQUENCE [GENOMIC DNA]</scope>
    <scope>FUNCTION</scope>
    <scope>VARIANTS SER-2; ILE-19 AND VAL-142</scope>
    <source>
        <strain>cv. Cvi-1</strain>
    </source>
</reference>
<reference key="6">
    <citation type="submission" date="2004-07" db="EMBL/GenBank/DDBJ databases">
        <authorList>
            <person name="Zhou R.Y."/>
            <person name="Sun Z.X."/>
        </authorList>
    </citation>
    <scope>NUCLEOTIDE SEQUENCE [GENOMIC DNA]</scope>
</reference>
<reference key="7">
    <citation type="submission" date="2006-01" db="EMBL/GenBank/DDBJ databases">
        <authorList>
            <person name="Aragao F.J.L."/>
            <person name="Morais A.T."/>
            <person name="Vieira L.S."/>
        </authorList>
    </citation>
    <scope>NUCLEOTIDE SEQUENCE [GENOMIC DNA]</scope>
</reference>
<reference key="8">
    <citation type="submission" date="2006-02" db="EMBL/GenBank/DDBJ databases">
        <title>The AP2 transcription factor related to cold resistance.</title>
        <authorList>
            <person name="Huang C.-L."/>
            <person name="Wu Z.-Y."/>
            <person name="Zhang X.-H."/>
            <person name="Brunel D."/>
            <person name="Pelletier G."/>
        </authorList>
    </citation>
    <scope>NUCLEOTIDE SEQUENCE [GENOMIC DNA]</scope>
    <source>
        <strain>cv. HOG</strain>
    </source>
</reference>
<reference key="9">
    <citation type="journal article" date="1999" name="Nature">
        <title>Sequence and analysis of chromosome 4 of the plant Arabidopsis thaliana.</title>
        <authorList>
            <person name="Mayer K.F.X."/>
            <person name="Schueller C."/>
            <person name="Wambutt R."/>
            <person name="Murphy G."/>
            <person name="Volckaert G."/>
            <person name="Pohl T."/>
            <person name="Duesterhoeft A."/>
            <person name="Stiekema W."/>
            <person name="Entian K.-D."/>
            <person name="Terryn N."/>
            <person name="Harris B."/>
            <person name="Ansorge W."/>
            <person name="Brandt P."/>
            <person name="Grivell L.A."/>
            <person name="Rieger M."/>
            <person name="Weichselgartner M."/>
            <person name="de Simone V."/>
            <person name="Obermaier B."/>
            <person name="Mache R."/>
            <person name="Mueller M."/>
            <person name="Kreis M."/>
            <person name="Delseny M."/>
            <person name="Puigdomenech P."/>
            <person name="Watson M."/>
            <person name="Schmidtheini T."/>
            <person name="Reichert B."/>
            <person name="Portetelle D."/>
            <person name="Perez-Alonso M."/>
            <person name="Boutry M."/>
            <person name="Bancroft I."/>
            <person name="Vos P."/>
            <person name="Hoheisel J."/>
            <person name="Zimmermann W."/>
            <person name="Wedler H."/>
            <person name="Ridley P."/>
            <person name="Langham S.-A."/>
            <person name="McCullagh B."/>
            <person name="Bilham L."/>
            <person name="Robben J."/>
            <person name="van der Schueren J."/>
            <person name="Grymonprez B."/>
            <person name="Chuang Y.-J."/>
            <person name="Vandenbussche F."/>
            <person name="Braeken M."/>
            <person name="Weltjens I."/>
            <person name="Voet M."/>
            <person name="Bastiaens I."/>
            <person name="Aert R."/>
            <person name="Defoor E."/>
            <person name="Weitzenegger T."/>
            <person name="Bothe G."/>
            <person name="Ramsperger U."/>
            <person name="Hilbert H."/>
            <person name="Braun M."/>
            <person name="Holzer E."/>
            <person name="Brandt A."/>
            <person name="Peters S."/>
            <person name="van Staveren M."/>
            <person name="Dirkse W."/>
            <person name="Mooijman P."/>
            <person name="Klein Lankhorst R."/>
            <person name="Rose M."/>
            <person name="Hauf J."/>
            <person name="Koetter P."/>
            <person name="Berneiser S."/>
            <person name="Hempel S."/>
            <person name="Feldpausch M."/>
            <person name="Lamberth S."/>
            <person name="Van den Daele H."/>
            <person name="De Keyser A."/>
            <person name="Buysshaert C."/>
            <person name="Gielen J."/>
            <person name="Villarroel R."/>
            <person name="De Clercq R."/>
            <person name="van Montagu M."/>
            <person name="Rogers J."/>
            <person name="Cronin A."/>
            <person name="Quail M.A."/>
            <person name="Bray-Allen S."/>
            <person name="Clark L."/>
            <person name="Doggett J."/>
            <person name="Hall S."/>
            <person name="Kay M."/>
            <person name="Lennard N."/>
            <person name="McLay K."/>
            <person name="Mayes R."/>
            <person name="Pettett A."/>
            <person name="Rajandream M.A."/>
            <person name="Lyne M."/>
            <person name="Benes V."/>
            <person name="Rechmann S."/>
            <person name="Borkova D."/>
            <person name="Bloecker H."/>
            <person name="Scharfe M."/>
            <person name="Grimm M."/>
            <person name="Loehnert T.-H."/>
            <person name="Dose S."/>
            <person name="de Haan M."/>
            <person name="Maarse A.C."/>
            <person name="Schaefer M."/>
            <person name="Mueller-Auer S."/>
            <person name="Gabel C."/>
            <person name="Fuchs M."/>
            <person name="Fartmann B."/>
            <person name="Granderath K."/>
            <person name="Dauner D."/>
            <person name="Herzl A."/>
            <person name="Neumann S."/>
            <person name="Argiriou A."/>
            <person name="Vitale D."/>
            <person name="Liguori R."/>
            <person name="Piravandi E."/>
            <person name="Massenet O."/>
            <person name="Quigley F."/>
            <person name="Clabauld G."/>
            <person name="Muendlein A."/>
            <person name="Felber R."/>
            <person name="Schnabl S."/>
            <person name="Hiller R."/>
            <person name="Schmidt W."/>
            <person name="Lecharny A."/>
            <person name="Aubourg S."/>
            <person name="Chefdor F."/>
            <person name="Cooke R."/>
            <person name="Berger C."/>
            <person name="Monfort A."/>
            <person name="Casacuberta E."/>
            <person name="Gibbons T."/>
            <person name="Weber N."/>
            <person name="Vandenbol M."/>
            <person name="Bargues M."/>
            <person name="Terol J."/>
            <person name="Torres A."/>
            <person name="Perez-Perez A."/>
            <person name="Purnelle B."/>
            <person name="Bent E."/>
            <person name="Johnson S."/>
            <person name="Tacon D."/>
            <person name="Jesse T."/>
            <person name="Heijnen L."/>
            <person name="Schwarz S."/>
            <person name="Scholler P."/>
            <person name="Heber S."/>
            <person name="Francs P."/>
            <person name="Bielke C."/>
            <person name="Frishman D."/>
            <person name="Haase D."/>
            <person name="Lemcke K."/>
            <person name="Mewes H.-W."/>
            <person name="Stocker S."/>
            <person name="Zaccaria P."/>
            <person name="Bevan M."/>
            <person name="Wilson R.K."/>
            <person name="de la Bastide M."/>
            <person name="Habermann K."/>
            <person name="Parnell L."/>
            <person name="Dedhia N."/>
            <person name="Gnoj L."/>
            <person name="Schutz K."/>
            <person name="Huang E."/>
            <person name="Spiegel L."/>
            <person name="Sekhon M."/>
            <person name="Murray J."/>
            <person name="Sheet P."/>
            <person name="Cordes M."/>
            <person name="Abu-Threideh J."/>
            <person name="Stoneking T."/>
            <person name="Kalicki J."/>
            <person name="Graves T."/>
            <person name="Harmon G."/>
            <person name="Edwards J."/>
            <person name="Latreille P."/>
            <person name="Courtney L."/>
            <person name="Cloud J."/>
            <person name="Abbott A."/>
            <person name="Scott K."/>
            <person name="Johnson D."/>
            <person name="Minx P."/>
            <person name="Bentley D."/>
            <person name="Fulton B."/>
            <person name="Miller N."/>
            <person name="Greco T."/>
            <person name="Kemp K."/>
            <person name="Kramer J."/>
            <person name="Fulton L."/>
            <person name="Mardis E."/>
            <person name="Dante M."/>
            <person name="Pepin K."/>
            <person name="Hillier L.W."/>
            <person name="Nelson J."/>
            <person name="Spieth J."/>
            <person name="Ryan E."/>
            <person name="Andrews S."/>
            <person name="Geisel C."/>
            <person name="Layman D."/>
            <person name="Du H."/>
            <person name="Ali J."/>
            <person name="Berghoff A."/>
            <person name="Jones K."/>
            <person name="Drone K."/>
            <person name="Cotton M."/>
            <person name="Joshu C."/>
            <person name="Antonoiu B."/>
            <person name="Zidanic M."/>
            <person name="Strong C."/>
            <person name="Sun H."/>
            <person name="Lamar B."/>
            <person name="Yordan C."/>
            <person name="Ma P."/>
            <person name="Zhong J."/>
            <person name="Preston R."/>
            <person name="Vil D."/>
            <person name="Shekher M."/>
            <person name="Matero A."/>
            <person name="Shah R."/>
            <person name="Swaby I.K."/>
            <person name="O'Shaughnessy A."/>
            <person name="Rodriguez M."/>
            <person name="Hoffman J."/>
            <person name="Till S."/>
            <person name="Granat S."/>
            <person name="Shohdy N."/>
            <person name="Hasegawa A."/>
            <person name="Hameed A."/>
            <person name="Lodhi M."/>
            <person name="Johnson A."/>
            <person name="Chen E."/>
            <person name="Marra M.A."/>
            <person name="Martienssen R."/>
            <person name="McCombie W.R."/>
        </authorList>
    </citation>
    <scope>NUCLEOTIDE SEQUENCE [LARGE SCALE GENOMIC DNA]</scope>
    <source>
        <strain>cv. Columbia</strain>
    </source>
</reference>
<reference key="10">
    <citation type="journal article" date="2017" name="Plant J.">
        <title>Araport11: a complete reannotation of the Arabidopsis thaliana reference genome.</title>
        <authorList>
            <person name="Cheng C.Y."/>
            <person name="Krishnakumar V."/>
            <person name="Chan A.P."/>
            <person name="Thibaud-Nissen F."/>
            <person name="Schobel S."/>
            <person name="Town C.D."/>
        </authorList>
    </citation>
    <scope>GENOME REANNOTATION</scope>
    <source>
        <strain>cv. Columbia</strain>
    </source>
</reference>
<reference key="11">
    <citation type="submission" date="2006-02" db="EMBL/GenBank/DDBJ databases">
        <title>Arabidopsis ORF clones.</title>
        <authorList>
            <person name="Shinn P."/>
            <person name="Chen H."/>
            <person name="Kim C.J."/>
            <person name="Ecker J.R."/>
        </authorList>
    </citation>
    <scope>NUCLEOTIDE SEQUENCE [LARGE SCALE MRNA]</scope>
    <source>
        <strain>cv. Columbia</strain>
    </source>
</reference>
<reference key="12">
    <citation type="journal article" date="2002" name="Biochem. Biophys. Res. Commun.">
        <title>DNA-binding specificity of the ERF/AP2 domain of Arabidopsis DREBs, transcription factors involved in dehydration- and cold-inducible gene expression.</title>
        <authorList>
            <person name="Sakuma Y."/>
            <person name="Liu Q."/>
            <person name="Dubouzet J.G."/>
            <person name="Abe H."/>
            <person name="Shinozaki K."/>
            <person name="Yamaguchi-Shinozaki K."/>
        </authorList>
    </citation>
    <scope>GENE FAMILY</scope>
    <scope>FUNCTION</scope>
    <scope>MUTAGENESIS OF VAL-63</scope>
</reference>
<reference key="13">
    <citation type="journal article" date="2003" name="Genes Dev.">
        <title>ICE1: a regulator of cold-induced transcriptome and freezing tolerance in Arabidopsis.</title>
        <authorList>
            <person name="Chinnusamy V."/>
            <person name="Ohta M."/>
            <person name="Kanrar S."/>
            <person name="Lee B.-H."/>
            <person name="Hong X."/>
            <person name="Agarwal M."/>
            <person name="Zhu J.-K."/>
        </authorList>
    </citation>
    <scope>GENETIC REGULATION</scope>
</reference>
<reference key="14">
    <citation type="journal article" date="2006" name="Plant Physiol.">
        <title>Genome-wide analysis of the ERF gene family in Arabidopsis and rice.</title>
        <authorList>
            <person name="Nakano T."/>
            <person name="Suzuki K."/>
            <person name="Fujimura T."/>
            <person name="Shinshi H."/>
        </authorList>
    </citation>
    <scope>GENE FAMILY</scope>
    <scope>NOMENCLATURE</scope>
</reference>
<reference key="15">
    <citation type="journal article" date="2017" name="Mol. Cell">
        <title>Plasma membrane CRPK1-mediated phosphorylation of 14-3-3 proteins induces their nuclear import to fine-tune CBF signaling during cold response.</title>
        <authorList>
            <person name="Liu Z."/>
            <person name="Jia Y."/>
            <person name="Ding Y."/>
            <person name="Shi Y."/>
            <person name="Li Z."/>
            <person name="Guo Y."/>
            <person name="Gong Z."/>
            <person name="Yang S."/>
        </authorList>
    </citation>
    <scope>INTERACTION WITH GRF1; GRF3; GRF5; GRF6; GRF7; GRF9 AND GRF10</scope>
    <scope>REGULATION BY PROTEASOME</scope>
    <source>
        <strain>cv. Columbia</strain>
    </source>
</reference>
<organism>
    <name type="scientific">Arabidopsis thaliana</name>
    <name type="common">Mouse-ear cress</name>
    <dbReference type="NCBI Taxonomy" id="3702"/>
    <lineage>
        <taxon>Eukaryota</taxon>
        <taxon>Viridiplantae</taxon>
        <taxon>Streptophyta</taxon>
        <taxon>Embryophyta</taxon>
        <taxon>Tracheophyta</taxon>
        <taxon>Spermatophyta</taxon>
        <taxon>Magnoliopsida</taxon>
        <taxon>eudicotyledons</taxon>
        <taxon>Gunneridae</taxon>
        <taxon>Pentapetalae</taxon>
        <taxon>rosids</taxon>
        <taxon>malvids</taxon>
        <taxon>Brassicales</taxon>
        <taxon>Brassicaceae</taxon>
        <taxon>Camelineae</taxon>
        <taxon>Arabidopsis</taxon>
    </lineage>
</organism>
<keyword id="KW-0010">Activator</keyword>
<keyword id="KW-0238">DNA-binding</keyword>
<keyword id="KW-0539">Nucleus</keyword>
<keyword id="KW-1185">Reference proteome</keyword>
<keyword id="KW-0346">Stress response</keyword>
<keyword id="KW-0804">Transcription</keyword>
<keyword id="KW-0805">Transcription regulation</keyword>
<dbReference type="EMBL" id="AB007787">
    <property type="protein sequence ID" value="BAA33791.1"/>
    <property type="molecule type" value="mRNA"/>
</dbReference>
<dbReference type="EMBL" id="AB013815">
    <property type="protein sequence ID" value="BAA33434.1"/>
    <property type="molecule type" value="Genomic_DNA"/>
</dbReference>
<dbReference type="EMBL" id="AF074602">
    <property type="protein sequence ID" value="AAD15977.1"/>
    <property type="molecule type" value="mRNA"/>
</dbReference>
<dbReference type="EMBL" id="AF076155">
    <property type="protein sequence ID" value="AAC99370.1"/>
    <property type="molecule type" value="Genomic_DNA"/>
</dbReference>
<dbReference type="EMBL" id="AF062924">
    <property type="protein sequence ID" value="AAC78646.1"/>
    <property type="molecule type" value="Genomic_DNA"/>
</dbReference>
<dbReference type="EMBL" id="AY667247">
    <property type="protein sequence ID" value="AAV80414.1"/>
    <property type="molecule type" value="Genomic_DNA"/>
</dbReference>
<dbReference type="EMBL" id="AY691904">
    <property type="protein sequence ID" value="AAU93686.1"/>
    <property type="molecule type" value="Genomic_DNA"/>
</dbReference>
<dbReference type="EMBL" id="DQ372533">
    <property type="protein sequence ID" value="ABD14412.1"/>
    <property type="molecule type" value="Genomic_DNA"/>
</dbReference>
<dbReference type="EMBL" id="DQ415923">
    <property type="protein sequence ID" value="ABD72616.1"/>
    <property type="status" value="ALT_SEQ"/>
    <property type="molecule type" value="Genomic_DNA"/>
</dbReference>
<dbReference type="EMBL" id="AL022197">
    <property type="protein sequence ID" value="CAA18178.1"/>
    <property type="status" value="ALT_SEQ"/>
    <property type="molecule type" value="Genomic_DNA"/>
</dbReference>
<dbReference type="EMBL" id="AL161563">
    <property type="protein sequence ID" value="CAB81358.1"/>
    <property type="status" value="ALT_SEQ"/>
    <property type="molecule type" value="Genomic_DNA"/>
</dbReference>
<dbReference type="EMBL" id="CP002687">
    <property type="protein sequence ID" value="AEE85065.1"/>
    <property type="molecule type" value="Genomic_DNA"/>
</dbReference>
<dbReference type="EMBL" id="BT024594">
    <property type="protein sequence ID" value="ABD42992.1"/>
    <property type="molecule type" value="mRNA"/>
</dbReference>
<dbReference type="PIR" id="D85294">
    <property type="entry name" value="D85294"/>
</dbReference>
<dbReference type="PIR" id="JE0297">
    <property type="entry name" value="JE0297"/>
</dbReference>
<dbReference type="PIR" id="T05799">
    <property type="entry name" value="T05799"/>
</dbReference>
<dbReference type="PIR" id="T51830">
    <property type="entry name" value="T51830"/>
</dbReference>
<dbReference type="RefSeq" id="NP_567720.1">
    <property type="nucleotide sequence ID" value="NM_118680.2"/>
</dbReference>
<dbReference type="SMR" id="Q9M0L0"/>
<dbReference type="BioGRID" id="13939">
    <property type="interactions" value="6"/>
</dbReference>
<dbReference type="FunCoup" id="Q9M0L0">
    <property type="interactions" value="207"/>
</dbReference>
<dbReference type="STRING" id="3702.Q9M0L0"/>
<dbReference type="PaxDb" id="3702-AT4G25480.1"/>
<dbReference type="EnsemblPlants" id="AT4G25480.1">
    <property type="protein sequence ID" value="AT4G25480.1"/>
    <property type="gene ID" value="AT4G25480"/>
</dbReference>
<dbReference type="GeneID" id="828652"/>
<dbReference type="Gramene" id="AT4G25480.1">
    <property type="protein sequence ID" value="AT4G25480.1"/>
    <property type="gene ID" value="AT4G25480"/>
</dbReference>
<dbReference type="KEGG" id="ath:AT4G25480"/>
<dbReference type="Araport" id="AT4G25480"/>
<dbReference type="TAIR" id="AT4G25480">
    <property type="gene designation" value="DREB1A"/>
</dbReference>
<dbReference type="eggNOG" id="ENOG502QQ5M">
    <property type="taxonomic scope" value="Eukaryota"/>
</dbReference>
<dbReference type="HOGENOM" id="CLU_063331_1_0_1"/>
<dbReference type="InParanoid" id="Q9M0L0"/>
<dbReference type="OMA" id="ADQFRPP"/>
<dbReference type="PhylomeDB" id="Q9M0L0"/>
<dbReference type="PRO" id="PR:Q9M0L0"/>
<dbReference type="Proteomes" id="UP000006548">
    <property type="component" value="Chromosome 4"/>
</dbReference>
<dbReference type="ExpressionAtlas" id="Q9M0L0">
    <property type="expression patterns" value="baseline and differential"/>
</dbReference>
<dbReference type="GO" id="GO:0005634">
    <property type="term" value="C:nucleus"/>
    <property type="evidence" value="ECO:0007669"/>
    <property type="project" value="UniProtKB-SubCell"/>
</dbReference>
<dbReference type="GO" id="GO:0000987">
    <property type="term" value="F:cis-regulatory region sequence-specific DNA binding"/>
    <property type="evidence" value="ECO:0000353"/>
    <property type="project" value="TAIR"/>
</dbReference>
<dbReference type="GO" id="GO:0003700">
    <property type="term" value="F:DNA-binding transcription factor activity"/>
    <property type="evidence" value="ECO:0000314"/>
    <property type="project" value="TAIR"/>
</dbReference>
<dbReference type="GO" id="GO:0000976">
    <property type="term" value="F:transcription cis-regulatory region binding"/>
    <property type="evidence" value="ECO:0000353"/>
    <property type="project" value="TAIR"/>
</dbReference>
<dbReference type="GO" id="GO:0009631">
    <property type="term" value="P:cold acclimation"/>
    <property type="evidence" value="ECO:0000315"/>
    <property type="project" value="TAIR"/>
</dbReference>
<dbReference type="GO" id="GO:0010628">
    <property type="term" value="P:positive regulation of gene expression"/>
    <property type="evidence" value="ECO:0000314"/>
    <property type="project" value="TAIR"/>
</dbReference>
<dbReference type="GO" id="GO:0009409">
    <property type="term" value="P:response to cold"/>
    <property type="evidence" value="ECO:0000314"/>
    <property type="project" value="TAIR"/>
</dbReference>
<dbReference type="GO" id="GO:0009414">
    <property type="term" value="P:response to water deprivation"/>
    <property type="evidence" value="ECO:0000314"/>
    <property type="project" value="TAIR"/>
</dbReference>
<dbReference type="CDD" id="cd00018">
    <property type="entry name" value="AP2"/>
    <property type="match status" value="1"/>
</dbReference>
<dbReference type="FunFam" id="3.30.730.10:FF:000001">
    <property type="entry name" value="Ethylene-responsive transcription factor 2"/>
    <property type="match status" value="1"/>
</dbReference>
<dbReference type="Gene3D" id="3.30.730.10">
    <property type="entry name" value="AP2/ERF domain"/>
    <property type="match status" value="1"/>
</dbReference>
<dbReference type="InterPro" id="IPR001471">
    <property type="entry name" value="AP2/ERF_dom"/>
</dbReference>
<dbReference type="InterPro" id="IPR036955">
    <property type="entry name" value="AP2/ERF_dom_sf"/>
</dbReference>
<dbReference type="InterPro" id="IPR016177">
    <property type="entry name" value="DNA-bd_dom_sf"/>
</dbReference>
<dbReference type="InterPro" id="IPR045277">
    <property type="entry name" value="DRE1A-I"/>
</dbReference>
<dbReference type="PANTHER" id="PTHR31839:SF23">
    <property type="entry name" value="DEHYDRATION-RESPONSIVE ELEMENT-BINDING PROTEIN 1A-RELATED"/>
    <property type="match status" value="1"/>
</dbReference>
<dbReference type="PANTHER" id="PTHR31839">
    <property type="entry name" value="DEHYDRATION-RESPONSIVE ELEMENT-BINDING PROTEIN 1D"/>
    <property type="match status" value="1"/>
</dbReference>
<dbReference type="Pfam" id="PF00847">
    <property type="entry name" value="AP2"/>
    <property type="match status" value="1"/>
</dbReference>
<dbReference type="PRINTS" id="PR00367">
    <property type="entry name" value="ETHRSPELEMNT"/>
</dbReference>
<dbReference type="SMART" id="SM00380">
    <property type="entry name" value="AP2"/>
    <property type="match status" value="1"/>
</dbReference>
<dbReference type="SUPFAM" id="SSF54171">
    <property type="entry name" value="DNA-binding domain"/>
    <property type="match status" value="1"/>
</dbReference>
<dbReference type="PROSITE" id="PS51032">
    <property type="entry name" value="AP2_ERF"/>
    <property type="match status" value="1"/>
</dbReference>
<comment type="function">
    <text evidence="3 4">Transcriptional activator that binds specifically to the DNA sequence 5'-[AG]CCGAC-3'. Binding to the C-repeat/DRE element mediates cold-inducible transcription. CBF/DREB1 factors play a key role in freezing tolerance and cold acclimation.</text>
</comment>
<comment type="subunit">
    <text evidence="5">Interacts with 14-3-3 proteins GRF1, GRF3, GRF5, GRF6, GRF7, GRF9 and GRF10 in the nucleus upon freezing.</text>
</comment>
<comment type="subcellular location">
    <subcellularLocation>
        <location evidence="12">Nucleus</location>
    </subcellularLocation>
</comment>
<comment type="induction">
    <text evidence="5 6 7 8">By cold stress. Positively regulated by the transcription factor ICE1. Subject to degradation by the 26S proteasome pathway in freezing conditions (PubMed:28344081).</text>
</comment>
<comment type="similarity">
    <text evidence="12">Belongs to the AP2/ERF transcription factor family. ERF subfamily.</text>
</comment>
<comment type="sequence caution" evidence="12">
    <conflict type="erroneous termination">
        <sequence resource="EMBL-CDS" id="ABD72616"/>
    </conflict>
    <text>Truncated C-terminus.</text>
</comment>
<comment type="sequence caution" evidence="12">
    <conflict type="erroneous gene model prediction">
        <sequence resource="EMBL-CDS" id="CAA18178"/>
    </conflict>
</comment>
<comment type="sequence caution" evidence="12">
    <conflict type="erroneous gene model prediction">
        <sequence resource="EMBL-CDS" id="CAB81358"/>
    </conflict>
</comment>
<gene>
    <name evidence="10" type="primary">DREB1A</name>
    <name evidence="11" type="synonym">CBF3</name>
    <name type="synonym">CRAP2</name>
    <name evidence="9" type="synonym">ERF072</name>
    <name evidence="13" type="ordered locus">At4g25480</name>
    <name evidence="14" type="ORF">M7J2.150</name>
</gene>
<protein>
    <recommendedName>
        <fullName evidence="10">Dehydration-responsive element-binding protein 1A</fullName>
        <shortName evidence="10">Protein DREB1A</shortName>
    </recommendedName>
    <alternativeName>
        <fullName evidence="11">C-repeat/dehydration-responsive element-binding factor 3</fullName>
        <shortName evidence="11">C-repeat-binding factor 3</shortName>
        <shortName evidence="11">CRT/DRE-binding factor 3</shortName>
    </alternativeName>
    <alternativeName>
        <fullName>Cold resistance-related AP2 transcription factor</fullName>
    </alternativeName>
</protein>
<proteinExistence type="evidence at protein level"/>
<accession>Q9M0L0</accession>
<accession>O65612</accession>
<accession>O82131</accession>
<accession>Q1ZZS0</accession>
<accession>Q2HII7</accession>
<accession>Q5QE70</accession>
<accession>Q5Y4C4</accession>
<accession>Q9SAZ3</accession>
<sequence length="216" mass="24236">MNSFSAFSEMFGSDYESSVSSGGDYIPTLASSCPKKPAGRKKFRETRHPIYRGVRRRNSGKWVCEVREPNKKTRIWLGTFQTAEMAARAHDVAALALRGRSACLNFADSAWRLRIPESTCAKDIQKAAAEAALAFQDEMCDATTDHGFDMEETLVEAIYTAEQSENAFYMHDEAMFEMPSLLANMAEGMLLPLPSVQWNHNHEVDGDDDDVSLWSY</sequence>
<feature type="chain" id="PRO_0000112528" description="Dehydration-responsive element-binding protein 1A">
    <location>
        <begin position="1"/>
        <end position="216"/>
    </location>
</feature>
<feature type="DNA-binding region" description="AP2/ERF" evidence="2">
    <location>
        <begin position="50"/>
        <end position="107"/>
    </location>
</feature>
<feature type="short sequence motif" description="Nuclear localization signal" evidence="1">
    <location>
        <begin position="35"/>
        <end position="47"/>
    </location>
</feature>
<feature type="sequence variant" description="In strain: cv. Cvi-1." evidence="4">
    <original>N</original>
    <variation>S</variation>
    <location>
        <position position="2"/>
    </location>
</feature>
<feature type="sequence variant" description="In strain: cv. Cvi-1." evidence="4">
    <original>V</original>
    <variation>I</variation>
    <location>
        <position position="19"/>
    </location>
</feature>
<feature type="sequence variant" description="In strain: cv. Cvi-1." evidence="4">
    <original>A</original>
    <variation>V</variation>
    <location>
        <position position="142"/>
    </location>
</feature>
<feature type="mutagenesis site" description="Affects the binding to the CRT/DRE cis-element." evidence="3">
    <original>V</original>
    <variation>A</variation>
    <location>
        <position position="63"/>
    </location>
</feature>
<feature type="sequence conflict" description="In Ref. 2; BAA33434, 6; AAU93686 and 7; ABD14412." evidence="12" ref="2 6 7">
    <original>H</original>
    <variation>Y</variation>
    <location>
        <position position="146"/>
    </location>
</feature>
<feature type="sequence conflict" description="In Ref. 8; ABD72616." evidence="12" ref="8">
    <original>L</original>
    <variation>P</variation>
    <location>
        <position position="193"/>
    </location>
</feature>